<name>SERC_SALNS</name>
<gene>
    <name evidence="1" type="primary">serC</name>
    <name type="ordered locus">SNSL254_A1010</name>
</gene>
<organism>
    <name type="scientific">Salmonella newport (strain SL254)</name>
    <dbReference type="NCBI Taxonomy" id="423368"/>
    <lineage>
        <taxon>Bacteria</taxon>
        <taxon>Pseudomonadati</taxon>
        <taxon>Pseudomonadota</taxon>
        <taxon>Gammaproteobacteria</taxon>
        <taxon>Enterobacterales</taxon>
        <taxon>Enterobacteriaceae</taxon>
        <taxon>Salmonella</taxon>
    </lineage>
</organism>
<proteinExistence type="inferred from homology"/>
<accession>B4T141</accession>
<evidence type="ECO:0000255" key="1">
    <source>
        <dbReference type="HAMAP-Rule" id="MF_00160"/>
    </source>
</evidence>
<sequence>MAQVFNFSSGPAMLPAEVLKLAQQELCDWHGLGTSVMEISHRGKEFIQVAEEAEQDFRDLLNIPSNYKVLFCHGGGRGQFAGVPLNLLGDKTTADYVDAGYWAASAIKEAKKYCAPQIIDAKITVDGKRAVKPMREWQLSDNAAYLHYCPNETIDGIAIDETPDFGPEVVVTADFSSTILSAPLDVSRYGVIYAGAQKNIGPAGLTLVIVREDLLGKAHESCPSILDYTVLNDNDSMFNTPPTFAWYLSGLVFKWLKAQGGVAAMHKINQQKAELLYGVIDNSDFYRNDVAQANRSRMNVPFQLADNTLDKVFLEESFAAGLHALKGHRVVGGMRASIYNAMPIEGVKALTDFMIDFERRHG</sequence>
<comment type="function">
    <text evidence="1">Catalyzes the reversible conversion of 3-phosphohydroxypyruvate to phosphoserine and of 3-hydroxy-2-oxo-4-phosphonooxybutanoate to phosphohydroxythreonine.</text>
</comment>
<comment type="catalytic activity">
    <reaction evidence="1">
        <text>O-phospho-L-serine + 2-oxoglutarate = 3-phosphooxypyruvate + L-glutamate</text>
        <dbReference type="Rhea" id="RHEA:14329"/>
        <dbReference type="ChEBI" id="CHEBI:16810"/>
        <dbReference type="ChEBI" id="CHEBI:18110"/>
        <dbReference type="ChEBI" id="CHEBI:29985"/>
        <dbReference type="ChEBI" id="CHEBI:57524"/>
        <dbReference type="EC" id="2.6.1.52"/>
    </reaction>
</comment>
<comment type="catalytic activity">
    <reaction evidence="1">
        <text>4-(phosphooxy)-L-threonine + 2-oxoglutarate = (R)-3-hydroxy-2-oxo-4-phosphooxybutanoate + L-glutamate</text>
        <dbReference type="Rhea" id="RHEA:16573"/>
        <dbReference type="ChEBI" id="CHEBI:16810"/>
        <dbReference type="ChEBI" id="CHEBI:29985"/>
        <dbReference type="ChEBI" id="CHEBI:58452"/>
        <dbReference type="ChEBI" id="CHEBI:58538"/>
        <dbReference type="EC" id="2.6.1.52"/>
    </reaction>
</comment>
<comment type="cofactor">
    <cofactor evidence="1">
        <name>pyridoxal 5'-phosphate</name>
        <dbReference type="ChEBI" id="CHEBI:597326"/>
    </cofactor>
    <text evidence="1">Binds 1 pyridoxal phosphate per subunit.</text>
</comment>
<comment type="pathway">
    <text evidence="1">Amino-acid biosynthesis; L-serine biosynthesis; L-serine from 3-phospho-D-glycerate: step 2/3.</text>
</comment>
<comment type="pathway">
    <text evidence="1">Cofactor biosynthesis; pyridoxine 5'-phosphate biosynthesis; pyridoxine 5'-phosphate from D-erythrose 4-phosphate: step 3/5.</text>
</comment>
<comment type="subunit">
    <text evidence="1">Homodimer.</text>
</comment>
<comment type="subcellular location">
    <subcellularLocation>
        <location evidence="1">Cytoplasm</location>
    </subcellularLocation>
</comment>
<comment type="similarity">
    <text evidence="1">Belongs to the class-V pyridoxal-phosphate-dependent aminotransferase family. SerC subfamily.</text>
</comment>
<feature type="chain" id="PRO_1000203556" description="Phosphoserine aminotransferase">
    <location>
        <begin position="1"/>
        <end position="362"/>
    </location>
</feature>
<feature type="binding site" evidence="1">
    <location>
        <position position="9"/>
    </location>
    <ligand>
        <name>L-glutamate</name>
        <dbReference type="ChEBI" id="CHEBI:29985"/>
    </ligand>
</feature>
<feature type="binding site" evidence="1">
    <location>
        <position position="42"/>
    </location>
    <ligand>
        <name>L-glutamate</name>
        <dbReference type="ChEBI" id="CHEBI:29985"/>
    </ligand>
</feature>
<feature type="binding site" evidence="1">
    <location>
        <begin position="76"/>
        <end position="77"/>
    </location>
    <ligand>
        <name>pyridoxal 5'-phosphate</name>
        <dbReference type="ChEBI" id="CHEBI:597326"/>
    </ligand>
</feature>
<feature type="binding site" evidence="1">
    <location>
        <position position="102"/>
    </location>
    <ligand>
        <name>pyridoxal 5'-phosphate</name>
        <dbReference type="ChEBI" id="CHEBI:597326"/>
    </ligand>
</feature>
<feature type="binding site" evidence="1">
    <location>
        <position position="153"/>
    </location>
    <ligand>
        <name>pyridoxal 5'-phosphate</name>
        <dbReference type="ChEBI" id="CHEBI:597326"/>
    </ligand>
</feature>
<feature type="binding site" evidence="1">
    <location>
        <position position="174"/>
    </location>
    <ligand>
        <name>pyridoxal 5'-phosphate</name>
        <dbReference type="ChEBI" id="CHEBI:597326"/>
    </ligand>
</feature>
<feature type="binding site" evidence="1">
    <location>
        <position position="197"/>
    </location>
    <ligand>
        <name>pyridoxal 5'-phosphate</name>
        <dbReference type="ChEBI" id="CHEBI:597326"/>
    </ligand>
</feature>
<feature type="binding site" evidence="1">
    <location>
        <begin position="239"/>
        <end position="240"/>
    </location>
    <ligand>
        <name>pyridoxal 5'-phosphate</name>
        <dbReference type="ChEBI" id="CHEBI:597326"/>
    </ligand>
</feature>
<feature type="modified residue" description="N6-(pyridoxal phosphate)lysine" evidence="1">
    <location>
        <position position="198"/>
    </location>
</feature>
<protein>
    <recommendedName>
        <fullName evidence="1">Phosphoserine aminotransferase</fullName>
        <ecNumber evidence="1">2.6.1.52</ecNumber>
    </recommendedName>
    <alternativeName>
        <fullName evidence="1">Phosphohydroxythreonine aminotransferase</fullName>
        <shortName evidence="1">PSAT</shortName>
    </alternativeName>
</protein>
<dbReference type="EC" id="2.6.1.52" evidence="1"/>
<dbReference type="EMBL" id="CP001113">
    <property type="protein sequence ID" value="ACF62207.1"/>
    <property type="molecule type" value="Genomic_DNA"/>
</dbReference>
<dbReference type="RefSeq" id="WP_000079584.1">
    <property type="nucleotide sequence ID" value="NZ_CCMR01000003.1"/>
</dbReference>
<dbReference type="SMR" id="B4T141"/>
<dbReference type="KEGG" id="see:SNSL254_A1010"/>
<dbReference type="HOGENOM" id="CLU_034866_0_2_6"/>
<dbReference type="UniPathway" id="UPA00135">
    <property type="reaction ID" value="UER00197"/>
</dbReference>
<dbReference type="UniPathway" id="UPA00244">
    <property type="reaction ID" value="UER00311"/>
</dbReference>
<dbReference type="Proteomes" id="UP000008824">
    <property type="component" value="Chromosome"/>
</dbReference>
<dbReference type="GO" id="GO:0005737">
    <property type="term" value="C:cytoplasm"/>
    <property type="evidence" value="ECO:0007669"/>
    <property type="project" value="UniProtKB-SubCell"/>
</dbReference>
<dbReference type="GO" id="GO:0004648">
    <property type="term" value="F:O-phospho-L-serine:2-oxoglutarate aminotransferase activity"/>
    <property type="evidence" value="ECO:0007669"/>
    <property type="project" value="UniProtKB-UniRule"/>
</dbReference>
<dbReference type="GO" id="GO:0030170">
    <property type="term" value="F:pyridoxal phosphate binding"/>
    <property type="evidence" value="ECO:0007669"/>
    <property type="project" value="UniProtKB-UniRule"/>
</dbReference>
<dbReference type="GO" id="GO:0006564">
    <property type="term" value="P:L-serine biosynthetic process"/>
    <property type="evidence" value="ECO:0007669"/>
    <property type="project" value="UniProtKB-UniRule"/>
</dbReference>
<dbReference type="GO" id="GO:0008615">
    <property type="term" value="P:pyridoxine biosynthetic process"/>
    <property type="evidence" value="ECO:0007669"/>
    <property type="project" value="UniProtKB-UniRule"/>
</dbReference>
<dbReference type="CDD" id="cd00611">
    <property type="entry name" value="PSAT_like"/>
    <property type="match status" value="1"/>
</dbReference>
<dbReference type="FunFam" id="3.40.640.10:FF:000010">
    <property type="entry name" value="Phosphoserine aminotransferase"/>
    <property type="match status" value="1"/>
</dbReference>
<dbReference type="FunFam" id="3.90.1150.10:FF:000006">
    <property type="entry name" value="Phosphoserine aminotransferase"/>
    <property type="match status" value="1"/>
</dbReference>
<dbReference type="Gene3D" id="3.90.1150.10">
    <property type="entry name" value="Aspartate Aminotransferase, domain 1"/>
    <property type="match status" value="1"/>
</dbReference>
<dbReference type="Gene3D" id="3.40.640.10">
    <property type="entry name" value="Type I PLP-dependent aspartate aminotransferase-like (Major domain)"/>
    <property type="match status" value="1"/>
</dbReference>
<dbReference type="HAMAP" id="MF_00160">
    <property type="entry name" value="SerC_aminotrans_5"/>
    <property type="match status" value="1"/>
</dbReference>
<dbReference type="InterPro" id="IPR000192">
    <property type="entry name" value="Aminotrans_V_dom"/>
</dbReference>
<dbReference type="InterPro" id="IPR020578">
    <property type="entry name" value="Aminotrans_V_PyrdxlP_BS"/>
</dbReference>
<dbReference type="InterPro" id="IPR022278">
    <property type="entry name" value="Pser_aminoTfrase"/>
</dbReference>
<dbReference type="InterPro" id="IPR015424">
    <property type="entry name" value="PyrdxlP-dep_Trfase"/>
</dbReference>
<dbReference type="InterPro" id="IPR015421">
    <property type="entry name" value="PyrdxlP-dep_Trfase_major"/>
</dbReference>
<dbReference type="InterPro" id="IPR015422">
    <property type="entry name" value="PyrdxlP-dep_Trfase_small"/>
</dbReference>
<dbReference type="NCBIfam" id="NF003764">
    <property type="entry name" value="PRK05355.1"/>
    <property type="match status" value="1"/>
</dbReference>
<dbReference type="NCBIfam" id="TIGR01364">
    <property type="entry name" value="serC_1"/>
    <property type="match status" value="1"/>
</dbReference>
<dbReference type="PANTHER" id="PTHR43247">
    <property type="entry name" value="PHOSPHOSERINE AMINOTRANSFERASE"/>
    <property type="match status" value="1"/>
</dbReference>
<dbReference type="PANTHER" id="PTHR43247:SF1">
    <property type="entry name" value="PHOSPHOSERINE AMINOTRANSFERASE"/>
    <property type="match status" value="1"/>
</dbReference>
<dbReference type="Pfam" id="PF00266">
    <property type="entry name" value="Aminotran_5"/>
    <property type="match status" value="1"/>
</dbReference>
<dbReference type="PIRSF" id="PIRSF000525">
    <property type="entry name" value="SerC"/>
    <property type="match status" value="1"/>
</dbReference>
<dbReference type="SUPFAM" id="SSF53383">
    <property type="entry name" value="PLP-dependent transferases"/>
    <property type="match status" value="1"/>
</dbReference>
<dbReference type="PROSITE" id="PS00595">
    <property type="entry name" value="AA_TRANSFER_CLASS_5"/>
    <property type="match status" value="1"/>
</dbReference>
<reference key="1">
    <citation type="journal article" date="2011" name="J. Bacteriol.">
        <title>Comparative genomics of 28 Salmonella enterica isolates: evidence for CRISPR-mediated adaptive sublineage evolution.</title>
        <authorList>
            <person name="Fricke W.F."/>
            <person name="Mammel M.K."/>
            <person name="McDermott P.F."/>
            <person name="Tartera C."/>
            <person name="White D.G."/>
            <person name="Leclerc J.E."/>
            <person name="Ravel J."/>
            <person name="Cebula T.A."/>
        </authorList>
    </citation>
    <scope>NUCLEOTIDE SEQUENCE [LARGE SCALE GENOMIC DNA]</scope>
    <source>
        <strain>SL254</strain>
    </source>
</reference>
<keyword id="KW-0028">Amino-acid biosynthesis</keyword>
<keyword id="KW-0032">Aminotransferase</keyword>
<keyword id="KW-0963">Cytoplasm</keyword>
<keyword id="KW-0663">Pyridoxal phosphate</keyword>
<keyword id="KW-0664">Pyridoxine biosynthesis</keyword>
<keyword id="KW-0718">Serine biosynthesis</keyword>
<keyword id="KW-0808">Transferase</keyword>